<name>TAGH_LACLA</name>
<proteinExistence type="inferred from homology"/>
<gene>
    <name evidence="1" type="primary">tagH</name>
    <name type="ordered locus">LL0915</name>
    <name type="ORF">L137446</name>
</gene>
<comment type="function">
    <text evidence="1">Part of the ABC transporter complex TagGH involved in teichoic acids export. Responsible for energy coupling to the transport system.</text>
</comment>
<comment type="catalytic activity">
    <reaction evidence="1">
        <text>ATP + H2O + teichoic acidSide 1 = ADP + phosphate + teichoic acidSide 2.</text>
        <dbReference type="EC" id="7.5.2.4"/>
    </reaction>
</comment>
<comment type="subunit">
    <text evidence="1">The complex is composed of two ATP-binding proteins (TagH) and two transmembrane proteins (TagG).</text>
</comment>
<comment type="subcellular location">
    <subcellularLocation>
        <location evidence="1">Cell membrane</location>
        <topology evidence="1">Peripheral membrane protein</topology>
    </subcellularLocation>
</comment>
<comment type="similarity">
    <text evidence="1">Belongs to the ABC transporter superfamily. Teichoic acids exporter (TC 3.A.1.104.1) family.</text>
</comment>
<keyword id="KW-0067">ATP-binding</keyword>
<keyword id="KW-1003">Cell membrane</keyword>
<keyword id="KW-0472">Membrane</keyword>
<keyword id="KW-0547">Nucleotide-binding</keyword>
<keyword id="KW-1185">Reference proteome</keyword>
<keyword id="KW-1278">Translocase</keyword>
<keyword id="KW-0813">Transport</keyword>
<accession>Q9CH26</accession>
<evidence type="ECO:0000255" key="1">
    <source>
        <dbReference type="HAMAP-Rule" id="MF_01715"/>
    </source>
</evidence>
<evidence type="ECO:0000255" key="2">
    <source>
        <dbReference type="PROSITE-ProRule" id="PRU01118"/>
    </source>
</evidence>
<evidence type="ECO:0000256" key="3">
    <source>
        <dbReference type="SAM" id="MobiDB-lite"/>
    </source>
</evidence>
<feature type="chain" id="PRO_0000092990" description="Teichoic acids export ATP-binding protein TagH">
    <location>
        <begin position="1"/>
        <end position="466"/>
    </location>
</feature>
<feature type="domain" description="ABC transporter" evidence="1">
    <location>
        <begin position="27"/>
        <end position="249"/>
    </location>
</feature>
<feature type="domain" description="LysM" evidence="2">
    <location>
        <begin position="403"/>
        <end position="447"/>
    </location>
</feature>
<feature type="region of interest" description="Unknown">
    <location>
        <begin position="250"/>
        <end position="466"/>
    </location>
</feature>
<feature type="region of interest" description="Disordered" evidence="3">
    <location>
        <begin position="356"/>
        <end position="403"/>
    </location>
</feature>
<feature type="region of interest" description="Disordered" evidence="3">
    <location>
        <begin position="439"/>
        <end position="466"/>
    </location>
</feature>
<feature type="compositionally biased region" description="Basic residues" evidence="3">
    <location>
        <begin position="373"/>
        <end position="384"/>
    </location>
</feature>
<feature type="compositionally biased region" description="Low complexity" evidence="3">
    <location>
        <begin position="385"/>
        <end position="403"/>
    </location>
</feature>
<feature type="compositionally biased region" description="Polar residues" evidence="3">
    <location>
        <begin position="449"/>
        <end position="466"/>
    </location>
</feature>
<feature type="binding site" evidence="1">
    <location>
        <begin position="63"/>
        <end position="70"/>
    </location>
    <ligand>
        <name>ATP</name>
        <dbReference type="ChEBI" id="CHEBI:30616"/>
    </ligand>
</feature>
<organism>
    <name type="scientific">Lactococcus lactis subsp. lactis (strain IL1403)</name>
    <name type="common">Streptococcus lactis</name>
    <dbReference type="NCBI Taxonomy" id="272623"/>
    <lineage>
        <taxon>Bacteria</taxon>
        <taxon>Bacillati</taxon>
        <taxon>Bacillota</taxon>
        <taxon>Bacilli</taxon>
        <taxon>Lactobacillales</taxon>
        <taxon>Streptococcaceae</taxon>
        <taxon>Lactococcus</taxon>
    </lineage>
</organism>
<reference key="1">
    <citation type="journal article" date="2001" name="Genome Res.">
        <title>The complete genome sequence of the lactic acid bacterium Lactococcus lactis ssp. lactis IL1403.</title>
        <authorList>
            <person name="Bolotin A."/>
            <person name="Wincker P."/>
            <person name="Mauger S."/>
            <person name="Jaillon O."/>
            <person name="Malarme K."/>
            <person name="Weissenbach J."/>
            <person name="Ehrlich S.D."/>
            <person name="Sorokin A."/>
        </authorList>
    </citation>
    <scope>NUCLEOTIDE SEQUENCE [LARGE SCALE GENOMIC DNA]</scope>
    <source>
        <strain>IL1403</strain>
    </source>
</reference>
<protein>
    <recommendedName>
        <fullName evidence="1">Teichoic acids export ATP-binding protein TagH</fullName>
        <ecNumber evidence="1">7.5.2.4</ecNumber>
    </recommendedName>
</protein>
<dbReference type="EC" id="7.5.2.4" evidence="1"/>
<dbReference type="EMBL" id="AE005176">
    <property type="protein sequence ID" value="AAK05013.1"/>
    <property type="molecule type" value="Genomic_DNA"/>
</dbReference>
<dbReference type="PIR" id="C86739">
    <property type="entry name" value="C86739"/>
</dbReference>
<dbReference type="RefSeq" id="NP_267071.1">
    <property type="nucleotide sequence ID" value="NC_002662.1"/>
</dbReference>
<dbReference type="RefSeq" id="WP_003131432.1">
    <property type="nucleotide sequence ID" value="NC_002662.1"/>
</dbReference>
<dbReference type="SMR" id="Q9CH26"/>
<dbReference type="PaxDb" id="272623-L137446"/>
<dbReference type="EnsemblBacteria" id="AAK05013">
    <property type="protein sequence ID" value="AAK05013"/>
    <property type="gene ID" value="L137446"/>
</dbReference>
<dbReference type="KEGG" id="lla:L137446"/>
<dbReference type="PATRIC" id="fig|272623.7.peg.980"/>
<dbReference type="eggNOG" id="COG1134">
    <property type="taxonomic scope" value="Bacteria"/>
</dbReference>
<dbReference type="eggNOG" id="COG1388">
    <property type="taxonomic scope" value="Bacteria"/>
</dbReference>
<dbReference type="HOGENOM" id="CLU_000604_101_8_9"/>
<dbReference type="OrthoDB" id="9778870at2"/>
<dbReference type="Proteomes" id="UP000002196">
    <property type="component" value="Chromosome"/>
</dbReference>
<dbReference type="GO" id="GO:0005886">
    <property type="term" value="C:plasma membrane"/>
    <property type="evidence" value="ECO:0007669"/>
    <property type="project" value="UniProtKB-SubCell"/>
</dbReference>
<dbReference type="GO" id="GO:0015438">
    <property type="term" value="F:ABC-type teichoic acid transporter activity"/>
    <property type="evidence" value="ECO:0007669"/>
    <property type="project" value="UniProtKB-EC"/>
</dbReference>
<dbReference type="GO" id="GO:0005524">
    <property type="term" value="F:ATP binding"/>
    <property type="evidence" value="ECO:0007669"/>
    <property type="project" value="UniProtKB-KW"/>
</dbReference>
<dbReference type="GO" id="GO:0016887">
    <property type="term" value="F:ATP hydrolysis activity"/>
    <property type="evidence" value="ECO:0007669"/>
    <property type="project" value="InterPro"/>
</dbReference>
<dbReference type="CDD" id="cd03220">
    <property type="entry name" value="ABC_KpsT_Wzt"/>
    <property type="match status" value="1"/>
</dbReference>
<dbReference type="CDD" id="cd00118">
    <property type="entry name" value="LysM"/>
    <property type="match status" value="1"/>
</dbReference>
<dbReference type="Gene3D" id="3.10.350.10">
    <property type="entry name" value="LysM domain"/>
    <property type="match status" value="1"/>
</dbReference>
<dbReference type="Gene3D" id="3.40.50.300">
    <property type="entry name" value="P-loop containing nucleotide triphosphate hydrolases"/>
    <property type="match status" value="1"/>
</dbReference>
<dbReference type="InterPro" id="IPR003593">
    <property type="entry name" value="AAA+_ATPase"/>
</dbReference>
<dbReference type="InterPro" id="IPR003439">
    <property type="entry name" value="ABC_transporter-like_ATP-bd"/>
</dbReference>
<dbReference type="InterPro" id="IPR017871">
    <property type="entry name" value="ABC_transporter-like_CS"/>
</dbReference>
<dbReference type="InterPro" id="IPR015860">
    <property type="entry name" value="ABC_transpr_TagH-like"/>
</dbReference>
<dbReference type="InterPro" id="IPR050683">
    <property type="entry name" value="Bact_Polysacc_Export_ATP-bd"/>
</dbReference>
<dbReference type="InterPro" id="IPR018392">
    <property type="entry name" value="LysM_dom"/>
</dbReference>
<dbReference type="InterPro" id="IPR036779">
    <property type="entry name" value="LysM_dom_sf"/>
</dbReference>
<dbReference type="InterPro" id="IPR027417">
    <property type="entry name" value="P-loop_NTPase"/>
</dbReference>
<dbReference type="PANTHER" id="PTHR46743">
    <property type="entry name" value="TEICHOIC ACIDS EXPORT ATP-BINDING PROTEIN TAGH"/>
    <property type="match status" value="1"/>
</dbReference>
<dbReference type="PANTHER" id="PTHR46743:SF2">
    <property type="entry name" value="TEICHOIC ACIDS EXPORT ATP-BINDING PROTEIN TAGH"/>
    <property type="match status" value="1"/>
</dbReference>
<dbReference type="Pfam" id="PF00005">
    <property type="entry name" value="ABC_tran"/>
    <property type="match status" value="1"/>
</dbReference>
<dbReference type="Pfam" id="PF01476">
    <property type="entry name" value="LysM"/>
    <property type="match status" value="1"/>
</dbReference>
<dbReference type="SMART" id="SM00382">
    <property type="entry name" value="AAA"/>
    <property type="match status" value="1"/>
</dbReference>
<dbReference type="SMART" id="SM00257">
    <property type="entry name" value="LysM"/>
    <property type="match status" value="1"/>
</dbReference>
<dbReference type="SUPFAM" id="SSF54106">
    <property type="entry name" value="LysM domain"/>
    <property type="match status" value="1"/>
</dbReference>
<dbReference type="SUPFAM" id="SSF52540">
    <property type="entry name" value="P-loop containing nucleoside triphosphate hydrolases"/>
    <property type="match status" value="1"/>
</dbReference>
<dbReference type="PROSITE" id="PS00211">
    <property type="entry name" value="ABC_TRANSPORTER_1"/>
    <property type="match status" value="1"/>
</dbReference>
<dbReference type="PROSITE" id="PS50893">
    <property type="entry name" value="ABC_TRANSPORTER_2"/>
    <property type="match status" value="1"/>
</dbReference>
<dbReference type="PROSITE" id="PS51782">
    <property type="entry name" value="LYSM"/>
    <property type="match status" value="1"/>
</dbReference>
<dbReference type="PROSITE" id="PS51251">
    <property type="entry name" value="TAGH"/>
    <property type="match status" value="1"/>
</dbReference>
<sequence>MNTNKVKIKAEYLTKKFELLPAKSSKNKAKSLIGSNSKNEKDFWALRNISFEIRDGECVGVIGLNGAGKSTLSNIISGQIAQTTGRVEINGDVSIIAASAGMQNNLSGRENIRLKALMVGLTNKEIKSKMDDIIEFSELGPFIDQPVKTYSSGMKAKLGFSIMVHQNPDIMIIDEGLSVGDKTFVDKSQKKMFEFRDEGKTILLVSHDMRTIKEWCDRVIWLNYGEVKAYGRPEEVIPEYEKFVQWFKKLPKKEQEKFKTDQRQAQLDYSVEELKAEIVSQNPSKSRRVQREVTEELKNKKDNHKLSLMSKVIVWLCLLAFIWITLVSLSNATLAESLRHPKTFFTERLFKSDTRNMTSTTKKEAVVKTSSSPKKKVSQAKKTTKVSSTQKNTSSSSSTSNQNTYIVQAGDSLSIIAENHGYSVEEIQQVNPGVDFSVIHPGQEINLPEPTTSANSTTEQSDGANQ</sequence>